<comment type="similarity">
    <text evidence="1">Belongs to the bacterial ribosomal protein bL33 family.</text>
</comment>
<evidence type="ECO:0000255" key="1">
    <source>
        <dbReference type="HAMAP-Rule" id="MF_00294"/>
    </source>
</evidence>
<proteinExistence type="inferred from homology"/>
<dbReference type="EMBL" id="AM295007">
    <property type="protein sequence ID" value="CAM30779.1"/>
    <property type="molecule type" value="Genomic_DNA"/>
</dbReference>
<dbReference type="SMR" id="A2RG00"/>
<dbReference type="KEGG" id="spf:SpyM51458A"/>
<dbReference type="HOGENOM" id="CLU_190949_0_2_9"/>
<dbReference type="GO" id="GO:0005737">
    <property type="term" value="C:cytoplasm"/>
    <property type="evidence" value="ECO:0007669"/>
    <property type="project" value="UniProtKB-ARBA"/>
</dbReference>
<dbReference type="GO" id="GO:1990904">
    <property type="term" value="C:ribonucleoprotein complex"/>
    <property type="evidence" value="ECO:0007669"/>
    <property type="project" value="UniProtKB-KW"/>
</dbReference>
<dbReference type="GO" id="GO:0005840">
    <property type="term" value="C:ribosome"/>
    <property type="evidence" value="ECO:0007669"/>
    <property type="project" value="UniProtKB-KW"/>
</dbReference>
<dbReference type="GO" id="GO:0003735">
    <property type="term" value="F:structural constituent of ribosome"/>
    <property type="evidence" value="ECO:0007669"/>
    <property type="project" value="InterPro"/>
</dbReference>
<dbReference type="GO" id="GO:0006412">
    <property type="term" value="P:translation"/>
    <property type="evidence" value="ECO:0007669"/>
    <property type="project" value="UniProtKB-UniRule"/>
</dbReference>
<dbReference type="Gene3D" id="2.20.28.120">
    <property type="entry name" value="Ribosomal protein L33"/>
    <property type="match status" value="1"/>
</dbReference>
<dbReference type="HAMAP" id="MF_00294">
    <property type="entry name" value="Ribosomal_bL33"/>
    <property type="match status" value="1"/>
</dbReference>
<dbReference type="InterPro" id="IPR001705">
    <property type="entry name" value="Ribosomal_bL33"/>
</dbReference>
<dbReference type="InterPro" id="IPR038584">
    <property type="entry name" value="Ribosomal_bL33_sf"/>
</dbReference>
<dbReference type="InterPro" id="IPR011332">
    <property type="entry name" value="Ribosomal_zn-bd"/>
</dbReference>
<dbReference type="NCBIfam" id="NF001764">
    <property type="entry name" value="PRK00504.1"/>
    <property type="match status" value="1"/>
</dbReference>
<dbReference type="NCBIfam" id="NF001860">
    <property type="entry name" value="PRK00595.1"/>
    <property type="match status" value="1"/>
</dbReference>
<dbReference type="NCBIfam" id="TIGR01023">
    <property type="entry name" value="rpmG_bact"/>
    <property type="match status" value="1"/>
</dbReference>
<dbReference type="PANTHER" id="PTHR43168">
    <property type="entry name" value="50S RIBOSOMAL PROTEIN L33, CHLOROPLASTIC"/>
    <property type="match status" value="1"/>
</dbReference>
<dbReference type="PANTHER" id="PTHR43168:SF6">
    <property type="entry name" value="LARGE RIBOSOMAL SUBUNIT PROTEIN BL33A"/>
    <property type="match status" value="1"/>
</dbReference>
<dbReference type="Pfam" id="PF00471">
    <property type="entry name" value="Ribosomal_L33"/>
    <property type="match status" value="1"/>
</dbReference>
<dbReference type="SUPFAM" id="SSF57829">
    <property type="entry name" value="Zn-binding ribosomal proteins"/>
    <property type="match status" value="1"/>
</dbReference>
<organism>
    <name type="scientific">Streptococcus pyogenes serotype M5 (strain Manfredo)</name>
    <dbReference type="NCBI Taxonomy" id="160491"/>
    <lineage>
        <taxon>Bacteria</taxon>
        <taxon>Bacillati</taxon>
        <taxon>Bacillota</taxon>
        <taxon>Bacilli</taxon>
        <taxon>Lactobacillales</taxon>
        <taxon>Streptococcaceae</taxon>
        <taxon>Streptococcus</taxon>
    </lineage>
</organism>
<sequence>MRVKINLECSECGSNNYLTSKNKSSHPEKIKVPKYCPKERKVTLHVET</sequence>
<name>RL331_STRPG</name>
<protein>
    <recommendedName>
        <fullName evidence="1">Large ribosomal subunit protein bL33A</fullName>
    </recommendedName>
    <alternativeName>
        <fullName evidence="1">50S ribosomal protein L33 1</fullName>
    </alternativeName>
</protein>
<reference key="1">
    <citation type="journal article" date="2007" name="J. Bacteriol.">
        <title>Complete genome of acute rheumatic fever-associated serotype M5 Streptococcus pyogenes strain Manfredo.</title>
        <authorList>
            <person name="Holden M.T.G."/>
            <person name="Scott A."/>
            <person name="Cherevach I."/>
            <person name="Chillingworth T."/>
            <person name="Churcher C."/>
            <person name="Cronin A."/>
            <person name="Dowd L."/>
            <person name="Feltwell T."/>
            <person name="Hamlin N."/>
            <person name="Holroyd S."/>
            <person name="Jagels K."/>
            <person name="Moule S."/>
            <person name="Mungall K."/>
            <person name="Quail M.A."/>
            <person name="Price C."/>
            <person name="Rabbinowitsch E."/>
            <person name="Sharp S."/>
            <person name="Skelton J."/>
            <person name="Whitehead S."/>
            <person name="Barrell B.G."/>
            <person name="Kehoe M."/>
            <person name="Parkhill J."/>
        </authorList>
    </citation>
    <scope>NUCLEOTIDE SEQUENCE [LARGE SCALE GENOMIC DNA]</scope>
    <source>
        <strain>Manfredo</strain>
    </source>
</reference>
<keyword id="KW-0687">Ribonucleoprotein</keyword>
<keyword id="KW-0689">Ribosomal protein</keyword>
<gene>
    <name evidence="1" type="primary">rpmG1</name>
    <name type="synonym">rpmG2</name>
    <name type="synonym">rpmGB</name>
    <name type="ordered locus">SpyM51458.1</name>
    <name type="ORF">SpyM51458A</name>
</gene>
<feature type="chain" id="PRO_0000356735" description="Large ribosomal subunit protein bL33A">
    <location>
        <begin position="1"/>
        <end position="48"/>
    </location>
</feature>
<accession>A2RG00</accession>